<name>PSD1B_ARATH</name>
<keyword id="KW-0007">Acetylation</keyword>
<keyword id="KW-1017">Isopeptide bond</keyword>
<keyword id="KW-0597">Phosphoprotein</keyword>
<keyword id="KW-0647">Proteasome</keyword>
<keyword id="KW-1185">Reference proteome</keyword>
<keyword id="KW-0677">Repeat</keyword>
<keyword id="KW-0832">Ubl conjugation</keyword>
<protein>
    <recommendedName>
        <fullName>26S proteasome non-ATPase regulatory subunit 1 homolog B</fullName>
    </recommendedName>
    <alternativeName>
        <fullName>26S proteasome regulatory subunit RPN2b</fullName>
        <shortName>AtRPN2b</shortName>
    </alternativeName>
    <alternativeName>
        <fullName>26S proteasome regulatory subunit S1 homolog B</fullName>
    </alternativeName>
</protein>
<feature type="initiator methionine" description="Removed" evidence="2 7">
    <location>
        <position position="1"/>
    </location>
</feature>
<feature type="chain" id="PRO_0000423177" description="26S proteasome non-ATPase regulatory subunit 1 homolog B">
    <location>
        <begin position="2"/>
        <end position="1001"/>
    </location>
</feature>
<feature type="repeat" description="PC 1">
    <location>
        <begin position="412"/>
        <end position="447"/>
    </location>
</feature>
<feature type="repeat" description="PC 2">
    <location>
        <begin position="452"/>
        <end position="485"/>
    </location>
</feature>
<feature type="repeat" description="PC 3">
    <location>
        <begin position="487"/>
        <end position="521"/>
    </location>
</feature>
<feature type="repeat" description="PC 4">
    <location>
        <begin position="522"/>
        <end position="555"/>
    </location>
</feature>
<feature type="repeat" description="PC 5">
    <location>
        <begin position="557"/>
        <end position="590"/>
    </location>
</feature>
<feature type="repeat" description="PC 6">
    <location>
        <begin position="591"/>
        <end position="626"/>
    </location>
</feature>
<feature type="repeat" description="PC 7">
    <location>
        <begin position="627"/>
        <end position="659"/>
    </location>
</feature>
<feature type="repeat" description="PC 8">
    <location>
        <begin position="661"/>
        <end position="695"/>
    </location>
</feature>
<feature type="repeat" description="PC 9">
    <location>
        <begin position="696"/>
        <end position="736"/>
    </location>
</feature>
<feature type="repeat" description="PC 10">
    <location>
        <begin position="739"/>
        <end position="771"/>
    </location>
</feature>
<feature type="region of interest" description="Disordered" evidence="3">
    <location>
        <begin position="853"/>
        <end position="896"/>
    </location>
</feature>
<feature type="region of interest" description="Disordered" evidence="3">
    <location>
        <begin position="954"/>
        <end position="1001"/>
    </location>
</feature>
<feature type="compositionally biased region" description="Basic and acidic residues" evidence="3">
    <location>
        <begin position="854"/>
        <end position="863"/>
    </location>
</feature>
<feature type="compositionally biased region" description="Low complexity" evidence="3">
    <location>
        <begin position="961"/>
        <end position="985"/>
    </location>
</feature>
<feature type="modified residue" description="N-acetylalanine" evidence="2">
    <location>
        <position position="2"/>
    </location>
</feature>
<feature type="modified residue" description="Phosphoserine" evidence="2">
    <location>
        <position position="889"/>
    </location>
</feature>
<feature type="cross-link" description="Glycyl lysine isopeptide (Lys-Gly) (interchain with G-Cter in ubiquitin)" evidence="5">
    <location>
        <position position="166"/>
    </location>
</feature>
<comment type="function">
    <text evidence="1">Acts as a regulatory subunit of the 26 proteasome which is involved in the ATP-dependent degradation of ubiquitinated proteins.</text>
</comment>
<comment type="subunit">
    <text evidence="4 5">Component of the 19S regulatory particle (RP/PA700) base subcomplex of the 26S proteasome. The 26S proteasome is composed of a core protease (CP), known as the 20S proteasome, capped at one or both ends by the 19S regulatory particle (RP/PA700). The RP/PA700 complex is composed of at least 17 different subunits in two subcomplexes, the base and the lid, which form the portions proximal and distal to the 20S proteolytic core, respectively.</text>
</comment>
<comment type="similarity">
    <text evidence="6">Belongs to the proteasome subunit S1 family.</text>
</comment>
<gene>
    <name type="primary">RPN2B</name>
    <name type="ordered locus">At1g04810</name>
    <name type="ORF">F13M7.20</name>
</gene>
<proteinExistence type="evidence at protein level"/>
<reference key="1">
    <citation type="journal article" date="2000" name="Nature">
        <title>Sequence and analysis of chromosome 1 of the plant Arabidopsis thaliana.</title>
        <authorList>
            <person name="Theologis A."/>
            <person name="Ecker J.R."/>
            <person name="Palm C.J."/>
            <person name="Federspiel N.A."/>
            <person name="Kaul S."/>
            <person name="White O."/>
            <person name="Alonso J."/>
            <person name="Altafi H."/>
            <person name="Araujo R."/>
            <person name="Bowman C.L."/>
            <person name="Brooks S.Y."/>
            <person name="Buehler E."/>
            <person name="Chan A."/>
            <person name="Chao Q."/>
            <person name="Chen H."/>
            <person name="Cheuk R.F."/>
            <person name="Chin C.W."/>
            <person name="Chung M.K."/>
            <person name="Conn L."/>
            <person name="Conway A.B."/>
            <person name="Conway A.R."/>
            <person name="Creasy T.H."/>
            <person name="Dewar K."/>
            <person name="Dunn P."/>
            <person name="Etgu P."/>
            <person name="Feldblyum T.V."/>
            <person name="Feng J.-D."/>
            <person name="Fong B."/>
            <person name="Fujii C.Y."/>
            <person name="Gill J.E."/>
            <person name="Goldsmith A.D."/>
            <person name="Haas B."/>
            <person name="Hansen N.F."/>
            <person name="Hughes B."/>
            <person name="Huizar L."/>
            <person name="Hunter J.L."/>
            <person name="Jenkins J."/>
            <person name="Johnson-Hopson C."/>
            <person name="Khan S."/>
            <person name="Khaykin E."/>
            <person name="Kim C.J."/>
            <person name="Koo H.L."/>
            <person name="Kremenetskaia I."/>
            <person name="Kurtz D.B."/>
            <person name="Kwan A."/>
            <person name="Lam B."/>
            <person name="Langin-Hooper S."/>
            <person name="Lee A."/>
            <person name="Lee J.M."/>
            <person name="Lenz C.A."/>
            <person name="Li J.H."/>
            <person name="Li Y.-P."/>
            <person name="Lin X."/>
            <person name="Liu S.X."/>
            <person name="Liu Z.A."/>
            <person name="Luros J.S."/>
            <person name="Maiti R."/>
            <person name="Marziali A."/>
            <person name="Militscher J."/>
            <person name="Miranda M."/>
            <person name="Nguyen M."/>
            <person name="Nierman W.C."/>
            <person name="Osborne B.I."/>
            <person name="Pai G."/>
            <person name="Peterson J."/>
            <person name="Pham P.K."/>
            <person name="Rizzo M."/>
            <person name="Rooney T."/>
            <person name="Rowley D."/>
            <person name="Sakano H."/>
            <person name="Salzberg S.L."/>
            <person name="Schwartz J.R."/>
            <person name="Shinn P."/>
            <person name="Southwick A.M."/>
            <person name="Sun H."/>
            <person name="Tallon L.J."/>
            <person name="Tambunga G."/>
            <person name="Toriumi M.J."/>
            <person name="Town C.D."/>
            <person name="Utterback T."/>
            <person name="Van Aken S."/>
            <person name="Vaysberg M."/>
            <person name="Vysotskaia V.S."/>
            <person name="Walker M."/>
            <person name="Wu D."/>
            <person name="Yu G."/>
            <person name="Fraser C.M."/>
            <person name="Venter J.C."/>
            <person name="Davis R.W."/>
        </authorList>
    </citation>
    <scope>NUCLEOTIDE SEQUENCE [LARGE SCALE GENOMIC DNA]</scope>
    <source>
        <strain>cv. Columbia</strain>
    </source>
</reference>
<reference key="2">
    <citation type="journal article" date="2017" name="Plant J.">
        <title>Araport11: a complete reannotation of the Arabidopsis thaliana reference genome.</title>
        <authorList>
            <person name="Cheng C.Y."/>
            <person name="Krishnakumar V."/>
            <person name="Chan A.P."/>
            <person name="Thibaud-Nissen F."/>
            <person name="Schobel S."/>
            <person name="Town C.D."/>
        </authorList>
    </citation>
    <scope>GENOME REANNOTATION</scope>
    <source>
        <strain>cv. Columbia</strain>
    </source>
</reference>
<reference key="3">
    <citation type="journal article" date="2003" name="Science">
        <title>Empirical analysis of transcriptional activity in the Arabidopsis genome.</title>
        <authorList>
            <person name="Yamada K."/>
            <person name="Lim J."/>
            <person name="Dale J.M."/>
            <person name="Chen H."/>
            <person name="Shinn P."/>
            <person name="Palm C.J."/>
            <person name="Southwick A.M."/>
            <person name="Wu H.C."/>
            <person name="Kim C.J."/>
            <person name="Nguyen M."/>
            <person name="Pham P.K."/>
            <person name="Cheuk R.F."/>
            <person name="Karlin-Newmann G."/>
            <person name="Liu S.X."/>
            <person name="Lam B."/>
            <person name="Sakano H."/>
            <person name="Wu T."/>
            <person name="Yu G."/>
            <person name="Miranda M."/>
            <person name="Quach H.L."/>
            <person name="Tripp M."/>
            <person name="Chang C.H."/>
            <person name="Lee J.M."/>
            <person name="Toriumi M.J."/>
            <person name="Chan M.M."/>
            <person name="Tang C.C."/>
            <person name="Onodera C.S."/>
            <person name="Deng J.M."/>
            <person name="Akiyama K."/>
            <person name="Ansari Y."/>
            <person name="Arakawa T."/>
            <person name="Banh J."/>
            <person name="Banno F."/>
            <person name="Bowser L."/>
            <person name="Brooks S.Y."/>
            <person name="Carninci P."/>
            <person name="Chao Q."/>
            <person name="Choy N."/>
            <person name="Enju A."/>
            <person name="Goldsmith A.D."/>
            <person name="Gurjal M."/>
            <person name="Hansen N.F."/>
            <person name="Hayashizaki Y."/>
            <person name="Johnson-Hopson C."/>
            <person name="Hsuan V.W."/>
            <person name="Iida K."/>
            <person name="Karnes M."/>
            <person name="Khan S."/>
            <person name="Koesema E."/>
            <person name="Ishida J."/>
            <person name="Jiang P.X."/>
            <person name="Jones T."/>
            <person name="Kawai J."/>
            <person name="Kamiya A."/>
            <person name="Meyers C."/>
            <person name="Nakajima M."/>
            <person name="Narusaka M."/>
            <person name="Seki M."/>
            <person name="Sakurai T."/>
            <person name="Satou M."/>
            <person name="Tamse R."/>
            <person name="Vaysberg M."/>
            <person name="Wallender E.K."/>
            <person name="Wong C."/>
            <person name="Yamamura Y."/>
            <person name="Yuan S."/>
            <person name="Shinozaki K."/>
            <person name="Davis R.W."/>
            <person name="Theologis A."/>
            <person name="Ecker J.R."/>
        </authorList>
    </citation>
    <scope>NUCLEOTIDE SEQUENCE [LARGE SCALE MRNA]</scope>
    <source>
        <strain>cv. Columbia</strain>
    </source>
</reference>
<reference key="4">
    <citation type="journal article" date="2004" name="J. Biol. Chem.">
        <title>Purification of the Arabidopsis 26 S proteasome: biochemical and molecular analyses revealed the presence of multiple isoforms.</title>
        <authorList>
            <person name="Yang P."/>
            <person name="Fu H."/>
            <person name="Walker J."/>
            <person name="Papa C.M."/>
            <person name="Smalle J."/>
            <person name="Ju Y.-M."/>
            <person name="Vierstra R.D."/>
        </authorList>
    </citation>
    <scope>NUCLEOTIDE SEQUENCE [MRNA] OF 2-996</scope>
    <scope>SUBUNIT</scope>
    <scope>IDENTIFICATION BY MASS SPECTROMETRY</scope>
    <source>
        <strain>cv. Columbia</strain>
    </source>
</reference>
<reference key="5">
    <citation type="journal article" date="2010" name="J. Biol. Chem.">
        <title>Affinity purification of the Arabidopsis 26 S proteasome reveals a diverse array of plant proteolytic complexes.</title>
        <authorList>
            <person name="Book A.J."/>
            <person name="Gladman N.P."/>
            <person name="Lee S.S."/>
            <person name="Scalf M."/>
            <person name="Smith L.M."/>
            <person name="Vierstra R.D."/>
        </authorList>
    </citation>
    <scope>IDENTIFICATION BY MASS SPECTROMETRY</scope>
    <scope>CHARACTERIZATION OF THE 26S PROTEASOME COMPLEX</scope>
    <scope>SUBUNIT</scope>
    <scope>UBIQUITINATION AT LYS-166</scope>
    <scope>CLEAVAGE OF INITIATOR METHIONINE</scope>
</reference>
<dbReference type="EMBL" id="AC004809">
    <property type="protein sequence ID" value="AAF40455.1"/>
    <property type="molecule type" value="Genomic_DNA"/>
</dbReference>
<dbReference type="EMBL" id="CP002684">
    <property type="protein sequence ID" value="AEE27746.1"/>
    <property type="molecule type" value="Genomic_DNA"/>
</dbReference>
<dbReference type="EMBL" id="BT004007">
    <property type="protein sequence ID" value="AAO42045.1"/>
    <property type="molecule type" value="mRNA"/>
</dbReference>
<dbReference type="EMBL" id="AY242527">
    <property type="protein sequence ID" value="AAP73043.1"/>
    <property type="molecule type" value="mRNA"/>
</dbReference>
<dbReference type="PIR" id="C86181">
    <property type="entry name" value="C86181"/>
</dbReference>
<dbReference type="RefSeq" id="NP_171973.1">
    <property type="nucleotide sequence ID" value="NM_100359.3"/>
</dbReference>
<dbReference type="SMR" id="Q9MAT0"/>
<dbReference type="BioGRID" id="24644">
    <property type="interactions" value="103"/>
</dbReference>
<dbReference type="FunCoup" id="Q9MAT0">
    <property type="interactions" value="4715"/>
</dbReference>
<dbReference type="IntAct" id="Q9MAT0">
    <property type="interactions" value="7"/>
</dbReference>
<dbReference type="STRING" id="3702.Q9MAT0"/>
<dbReference type="iPTMnet" id="Q9MAT0"/>
<dbReference type="PaxDb" id="3702-AT1G04810.1"/>
<dbReference type="ProMEX" id="Q9MAT0"/>
<dbReference type="ProteomicsDB" id="226352"/>
<dbReference type="EnsemblPlants" id="AT1G04810.1">
    <property type="protein sequence ID" value="AT1G04810.1"/>
    <property type="gene ID" value="AT1G04810"/>
</dbReference>
<dbReference type="GeneID" id="839409"/>
<dbReference type="Gramene" id="AT1G04810.1">
    <property type="protein sequence ID" value="AT1G04810.1"/>
    <property type="gene ID" value="AT1G04810"/>
</dbReference>
<dbReference type="KEGG" id="ath:AT1G04810"/>
<dbReference type="Araport" id="AT1G04810"/>
<dbReference type="TAIR" id="AT1G04810"/>
<dbReference type="eggNOG" id="KOG2062">
    <property type="taxonomic scope" value="Eukaryota"/>
</dbReference>
<dbReference type="HOGENOM" id="CLU_002323_0_0_1"/>
<dbReference type="InParanoid" id="Q9MAT0"/>
<dbReference type="OMA" id="HENENFK"/>
<dbReference type="PhylomeDB" id="Q9MAT0"/>
<dbReference type="PRO" id="PR:Q9MAT0"/>
<dbReference type="Proteomes" id="UP000006548">
    <property type="component" value="Chromosome 1"/>
</dbReference>
<dbReference type="ExpressionAtlas" id="Q9MAT0">
    <property type="expression patterns" value="baseline and differential"/>
</dbReference>
<dbReference type="GO" id="GO:0005576">
    <property type="term" value="C:extracellular region"/>
    <property type="evidence" value="ECO:0007005"/>
    <property type="project" value="TAIR"/>
</dbReference>
<dbReference type="GO" id="GO:0005634">
    <property type="term" value="C:nucleus"/>
    <property type="evidence" value="ECO:0000304"/>
    <property type="project" value="TAIR"/>
</dbReference>
<dbReference type="GO" id="GO:0000502">
    <property type="term" value="C:proteasome complex"/>
    <property type="evidence" value="ECO:0000314"/>
    <property type="project" value="TAIR"/>
</dbReference>
<dbReference type="GO" id="GO:0030234">
    <property type="term" value="F:enzyme regulator activity"/>
    <property type="evidence" value="ECO:0007669"/>
    <property type="project" value="InterPro"/>
</dbReference>
<dbReference type="GO" id="GO:0030163">
    <property type="term" value="P:protein catabolic process"/>
    <property type="evidence" value="ECO:0000304"/>
    <property type="project" value="TAIR"/>
</dbReference>
<dbReference type="GO" id="GO:0042176">
    <property type="term" value="P:regulation of protein catabolic process"/>
    <property type="evidence" value="ECO:0007669"/>
    <property type="project" value="InterPro"/>
</dbReference>
<dbReference type="FunFam" id="1.25.10.10:FF:000048">
    <property type="entry name" value="26S proteasome non-ATPase regulatory subunit 1 homolog"/>
    <property type="match status" value="1"/>
</dbReference>
<dbReference type="Gene3D" id="1.25.10.10">
    <property type="entry name" value="Leucine-rich Repeat Variant"/>
    <property type="match status" value="1"/>
</dbReference>
<dbReference type="InterPro" id="IPR016642">
    <property type="entry name" value="26S_Psome_Rpn2"/>
</dbReference>
<dbReference type="InterPro" id="IPR011989">
    <property type="entry name" value="ARM-like"/>
</dbReference>
<dbReference type="InterPro" id="IPR016024">
    <property type="entry name" value="ARM-type_fold"/>
</dbReference>
<dbReference type="InterPro" id="IPR002015">
    <property type="entry name" value="Proteasome/cyclosome_rpt"/>
</dbReference>
<dbReference type="InterPro" id="IPR048570">
    <property type="entry name" value="PSMD1_RPN2_N"/>
</dbReference>
<dbReference type="InterPro" id="IPR040623">
    <property type="entry name" value="RPN2_C"/>
</dbReference>
<dbReference type="PANTHER" id="PTHR10943">
    <property type="entry name" value="26S PROTEASOME NON-ATPASE REGULATORY SUBUNIT"/>
    <property type="match status" value="1"/>
</dbReference>
<dbReference type="PANTHER" id="PTHR10943:SF2">
    <property type="entry name" value="26S PROTEASOME NON-ATPASE REGULATORY SUBUNIT 1"/>
    <property type="match status" value="1"/>
</dbReference>
<dbReference type="Pfam" id="PF13646">
    <property type="entry name" value="HEAT_2"/>
    <property type="match status" value="1"/>
</dbReference>
<dbReference type="Pfam" id="PF01851">
    <property type="entry name" value="PC_rep"/>
    <property type="match status" value="1"/>
</dbReference>
<dbReference type="Pfam" id="PF18004">
    <property type="entry name" value="RPN2_C"/>
    <property type="match status" value="1"/>
</dbReference>
<dbReference type="Pfam" id="PF21505">
    <property type="entry name" value="RPN2_N"/>
    <property type="match status" value="1"/>
</dbReference>
<dbReference type="PIRSF" id="PIRSF015947">
    <property type="entry name" value="26S_Psome_Rpn2"/>
    <property type="match status" value="1"/>
</dbReference>
<dbReference type="SUPFAM" id="SSF48371">
    <property type="entry name" value="ARM repeat"/>
    <property type="match status" value="1"/>
</dbReference>
<organism>
    <name type="scientific">Arabidopsis thaliana</name>
    <name type="common">Mouse-ear cress</name>
    <dbReference type="NCBI Taxonomy" id="3702"/>
    <lineage>
        <taxon>Eukaryota</taxon>
        <taxon>Viridiplantae</taxon>
        <taxon>Streptophyta</taxon>
        <taxon>Embryophyta</taxon>
        <taxon>Tracheophyta</taxon>
        <taxon>Spermatophyta</taxon>
        <taxon>Magnoliopsida</taxon>
        <taxon>eudicotyledons</taxon>
        <taxon>Gunneridae</taxon>
        <taxon>Pentapetalae</taxon>
        <taxon>rosids</taxon>
        <taxon>malvids</taxon>
        <taxon>Brassicales</taxon>
        <taxon>Brassicaceae</taxon>
        <taxon>Camelineae</taxon>
        <taxon>Arabidopsis</taxon>
    </lineage>
</organism>
<sequence>MAAAMVSSAGGLLAMLNEPHPSLKLHALSYLIRLVDQFWPEISTSVPIIESLYEDEEFDQHQRQLAALLASKVFYYLGELNDSLSYALGAGSLFDVSEDSDYIHTLLSKAIDEYAILRSKAVESSEVVEIDPRLVAIVERMLDKCITDGKYQQAMGIAIECRRLDKLEEAIIKSENVQGTLSYCINVSHSFVNQREYRHEVLRLLVNVYQKLASPDYLSICQCLMFLDEPQGVASILEKLLRSENKDDALLAFQISFDLVQNEHQAFLMSVRDRLPAPKTRPVEAIQAVETSTAQNENTAGDVQMADETPSQTIVHETDPVDAVYAERLTKAKGILSGETSIQLTLQFLYSHNKSDLLILKTIKQSVEMRNSVCHSATIYANAIMHAGTTVDTFLRENLDWLSRATNWAKFSATAGLGVIHRGHLQQGRSLMAPYLPQGGAGGGGSPYSEGGALYALGLIHANHGEGIKQFLRDSLRSTSVEVIQHGACLGLGLAALGTADEDIYDDIKSVLYTDSAVAGEAAGISMGLLLVGTATDKASEMLAYAHETQHEKIIRGLALGIALTVYGREEGADTLIEQMTRDQDPIIRYGGMYALALAYSGTANNKAIRQLLHFAVSDVSDDVRRTAVLALGFVLYSDPEQTPRIVSLLSESYNPHVRYGAALAVGISCAGTGLSEAISLLEPLTSDVVDFVRQGALIAMAMVMVQISEASDSRVGAFRRQLEKIILDKHEDTMSKMGAILASGILDAGGRNVTIRLLSKTKHDKVTAVIGLTVFSQFWYWYPLIYFISLAFSPTAFIGLNYDLKVPKFEFMSHAKPSLFEYPKPTTVATANTAAKLPTAVLSTSAKAKAKAKKEAEQKAKAENSGNEAGKANAASDEKEAESMQVDSTATTVEKKVEPEATFEILVNPARVVPSQEKYIKLMEDSRYVPMKLAPSGFVLLRDLRPHEPEVLSLTDAPTSTASPAVGAEAAGQAQQAATTSAMAIDDEPQPPQAFEYASP</sequence>
<evidence type="ECO:0000250" key="1"/>
<evidence type="ECO:0000250" key="2">
    <source>
        <dbReference type="UniProtKB" id="O48844"/>
    </source>
</evidence>
<evidence type="ECO:0000256" key="3">
    <source>
        <dbReference type="SAM" id="MobiDB-lite"/>
    </source>
</evidence>
<evidence type="ECO:0000269" key="4">
    <source>
    </source>
</evidence>
<evidence type="ECO:0000269" key="5">
    <source>
    </source>
</evidence>
<evidence type="ECO:0000305" key="6"/>
<evidence type="ECO:0000305" key="7">
    <source>
    </source>
</evidence>
<accession>Q9MAT0</accession>
<accession>Q6XBM5</accession>